<accession>Q4JV79</accession>
<protein>
    <recommendedName>
        <fullName evidence="1">tRNA-2-methylthio-N(6)-dimethylallyladenosine synthase</fullName>
        <ecNumber evidence="1">2.8.4.3</ecNumber>
    </recommendedName>
    <alternativeName>
        <fullName evidence="1">(Dimethylallyl)adenosine tRNA methylthiotransferase MiaB</fullName>
    </alternativeName>
    <alternativeName>
        <fullName evidence="1">tRNA-i(6)A37 methylthiotransferase</fullName>
    </alternativeName>
</protein>
<sequence>MTQTIQTQTGKNSGAGRTYEVRTFGCQMNVHDSERLSGLLEDSGYVPASEGVTPDVVVFNTCAVRENADKRLYGTLGQMKAIKDEHPGMQIAVGGCMAQKDKQTVVDKAPWVDVVFGTHNLGSLPTLLERSAHNHKAEVEIFDALEEFPSVLPAKRESAYAGWVSVSVGCNNTCTFCIVPSLRGKEQDRRPGEILAEVKALVEQGVSEVTLLGQNVNAYGVNFADETLERDRTAFSKLLRACGEIEGLERLRFTSPHPAEFTDDVIDAMAETPAVCPQLHMPLQSGSDKVLKDMKRSYRSKKFLAILDKVRERIPHAAITTDIIVGFPGETEEDFQATLDVVEKARFSSAFTFQYSPRPGTPAAEMENQVPKAVVQDRYERLLALQERISEEENRKLIGTTQELLVQADGRKNDRTQRRSGRSRDGRLVHFTPEGDVRAGDVVEVVITDAAPHFLIADGGVASHRRTRAGDMTELGETPTTAPVGVGLGMPSIKKPEPTTAGGCSTGGCGCE</sequence>
<comment type="function">
    <text evidence="1">Catalyzes the methylthiolation of N6-(dimethylallyl)adenosine (i(6)A), leading to the formation of 2-methylthio-N6-(dimethylallyl)adenosine (ms(2)i(6)A) at position 37 in tRNAs that read codons beginning with uridine.</text>
</comment>
<comment type="catalytic activity">
    <reaction evidence="1">
        <text>N(6)-dimethylallyladenosine(37) in tRNA + (sulfur carrier)-SH + AH2 + 2 S-adenosyl-L-methionine = 2-methylsulfanyl-N(6)-dimethylallyladenosine(37) in tRNA + (sulfur carrier)-H + 5'-deoxyadenosine + L-methionine + A + S-adenosyl-L-homocysteine + 2 H(+)</text>
        <dbReference type="Rhea" id="RHEA:37067"/>
        <dbReference type="Rhea" id="RHEA-COMP:10375"/>
        <dbReference type="Rhea" id="RHEA-COMP:10376"/>
        <dbReference type="Rhea" id="RHEA-COMP:14737"/>
        <dbReference type="Rhea" id="RHEA-COMP:14739"/>
        <dbReference type="ChEBI" id="CHEBI:13193"/>
        <dbReference type="ChEBI" id="CHEBI:15378"/>
        <dbReference type="ChEBI" id="CHEBI:17319"/>
        <dbReference type="ChEBI" id="CHEBI:17499"/>
        <dbReference type="ChEBI" id="CHEBI:29917"/>
        <dbReference type="ChEBI" id="CHEBI:57844"/>
        <dbReference type="ChEBI" id="CHEBI:57856"/>
        <dbReference type="ChEBI" id="CHEBI:59789"/>
        <dbReference type="ChEBI" id="CHEBI:64428"/>
        <dbReference type="ChEBI" id="CHEBI:74415"/>
        <dbReference type="ChEBI" id="CHEBI:74417"/>
        <dbReference type="EC" id="2.8.4.3"/>
    </reaction>
</comment>
<comment type="cofactor">
    <cofactor evidence="1">
        <name>[4Fe-4S] cluster</name>
        <dbReference type="ChEBI" id="CHEBI:49883"/>
    </cofactor>
    <text evidence="1">Binds 2 [4Fe-4S] clusters. One cluster is coordinated with 3 cysteines and an exchangeable S-adenosyl-L-methionine.</text>
</comment>
<comment type="subunit">
    <text evidence="1">Monomer.</text>
</comment>
<comment type="subcellular location">
    <subcellularLocation>
        <location evidence="1">Cytoplasm</location>
    </subcellularLocation>
</comment>
<comment type="similarity">
    <text evidence="1">Belongs to the methylthiotransferase family. MiaB subfamily.</text>
</comment>
<keyword id="KW-0004">4Fe-4S</keyword>
<keyword id="KW-0963">Cytoplasm</keyword>
<keyword id="KW-0408">Iron</keyword>
<keyword id="KW-0411">Iron-sulfur</keyword>
<keyword id="KW-0479">Metal-binding</keyword>
<keyword id="KW-1185">Reference proteome</keyword>
<keyword id="KW-0949">S-adenosyl-L-methionine</keyword>
<keyword id="KW-0808">Transferase</keyword>
<keyword id="KW-0819">tRNA processing</keyword>
<gene>
    <name evidence="1" type="primary">miaB</name>
    <name type="ordered locus">jk1114</name>
</gene>
<organism>
    <name type="scientific">Corynebacterium jeikeium (strain K411)</name>
    <dbReference type="NCBI Taxonomy" id="306537"/>
    <lineage>
        <taxon>Bacteria</taxon>
        <taxon>Bacillati</taxon>
        <taxon>Actinomycetota</taxon>
        <taxon>Actinomycetes</taxon>
        <taxon>Mycobacteriales</taxon>
        <taxon>Corynebacteriaceae</taxon>
        <taxon>Corynebacterium</taxon>
    </lineage>
</organism>
<proteinExistence type="inferred from homology"/>
<feature type="chain" id="PRO_0000374242" description="tRNA-2-methylthio-N(6)-dimethylallyladenosine synthase">
    <location>
        <begin position="1"/>
        <end position="512"/>
    </location>
</feature>
<feature type="domain" description="MTTase N-terminal" evidence="1">
    <location>
        <begin position="17"/>
        <end position="133"/>
    </location>
</feature>
<feature type="domain" description="Radical SAM core" evidence="2">
    <location>
        <begin position="156"/>
        <end position="392"/>
    </location>
</feature>
<feature type="domain" description="TRAM" evidence="1">
    <location>
        <begin position="395"/>
        <end position="461"/>
    </location>
</feature>
<feature type="region of interest" description="Disordered" evidence="3">
    <location>
        <begin position="473"/>
        <end position="512"/>
    </location>
</feature>
<feature type="binding site" evidence="1">
    <location>
        <position position="26"/>
    </location>
    <ligand>
        <name>[4Fe-4S] cluster</name>
        <dbReference type="ChEBI" id="CHEBI:49883"/>
        <label>1</label>
    </ligand>
</feature>
<feature type="binding site" evidence="1">
    <location>
        <position position="62"/>
    </location>
    <ligand>
        <name>[4Fe-4S] cluster</name>
        <dbReference type="ChEBI" id="CHEBI:49883"/>
        <label>1</label>
    </ligand>
</feature>
<feature type="binding site" evidence="1">
    <location>
        <position position="96"/>
    </location>
    <ligand>
        <name>[4Fe-4S] cluster</name>
        <dbReference type="ChEBI" id="CHEBI:49883"/>
        <label>1</label>
    </ligand>
</feature>
<feature type="binding site" evidence="1">
    <location>
        <position position="170"/>
    </location>
    <ligand>
        <name>[4Fe-4S] cluster</name>
        <dbReference type="ChEBI" id="CHEBI:49883"/>
        <label>2</label>
        <note>4Fe-4S-S-AdoMet</note>
    </ligand>
</feature>
<feature type="binding site" evidence="1">
    <location>
        <position position="174"/>
    </location>
    <ligand>
        <name>[4Fe-4S] cluster</name>
        <dbReference type="ChEBI" id="CHEBI:49883"/>
        <label>2</label>
        <note>4Fe-4S-S-AdoMet</note>
    </ligand>
</feature>
<feature type="binding site" evidence="1">
    <location>
        <position position="177"/>
    </location>
    <ligand>
        <name>[4Fe-4S] cluster</name>
        <dbReference type="ChEBI" id="CHEBI:49883"/>
        <label>2</label>
        <note>4Fe-4S-S-AdoMet</note>
    </ligand>
</feature>
<reference key="1">
    <citation type="journal article" date="2005" name="J. Bacteriol.">
        <title>Complete genome sequence and analysis of the multiresistant nosocomial pathogen Corynebacterium jeikeium K411, a lipid-requiring bacterium of the human skin flora.</title>
        <authorList>
            <person name="Tauch A."/>
            <person name="Kaiser O."/>
            <person name="Hain T."/>
            <person name="Goesmann A."/>
            <person name="Weisshaar B."/>
            <person name="Albersmeier A."/>
            <person name="Bekel T."/>
            <person name="Bischoff N."/>
            <person name="Brune I."/>
            <person name="Chakraborty T."/>
            <person name="Kalinowski J."/>
            <person name="Meyer F."/>
            <person name="Rupp O."/>
            <person name="Schneiker S."/>
            <person name="Viehoever P."/>
            <person name="Puehler A."/>
        </authorList>
    </citation>
    <scope>NUCLEOTIDE SEQUENCE [LARGE SCALE GENOMIC DNA]</scope>
    <source>
        <strain>K411</strain>
    </source>
</reference>
<name>MIAB_CORJK</name>
<evidence type="ECO:0000255" key="1">
    <source>
        <dbReference type="HAMAP-Rule" id="MF_01864"/>
    </source>
</evidence>
<evidence type="ECO:0000255" key="2">
    <source>
        <dbReference type="PROSITE-ProRule" id="PRU01266"/>
    </source>
</evidence>
<evidence type="ECO:0000256" key="3">
    <source>
        <dbReference type="SAM" id="MobiDB-lite"/>
    </source>
</evidence>
<dbReference type="EC" id="2.8.4.3" evidence="1"/>
<dbReference type="EMBL" id="CR931997">
    <property type="protein sequence ID" value="CAI37278.1"/>
    <property type="molecule type" value="Genomic_DNA"/>
</dbReference>
<dbReference type="RefSeq" id="WP_011273661.1">
    <property type="nucleotide sequence ID" value="NC_007164.1"/>
</dbReference>
<dbReference type="SMR" id="Q4JV79"/>
<dbReference type="STRING" id="306537.jk1114"/>
<dbReference type="KEGG" id="cjk:jk1114"/>
<dbReference type="PATRIC" id="fig|306537.10.peg.1127"/>
<dbReference type="eggNOG" id="COG0621">
    <property type="taxonomic scope" value="Bacteria"/>
</dbReference>
<dbReference type="HOGENOM" id="CLU_018697_2_2_11"/>
<dbReference type="OrthoDB" id="9805215at2"/>
<dbReference type="Proteomes" id="UP000000545">
    <property type="component" value="Chromosome"/>
</dbReference>
<dbReference type="GO" id="GO:0005829">
    <property type="term" value="C:cytosol"/>
    <property type="evidence" value="ECO:0007669"/>
    <property type="project" value="TreeGrafter"/>
</dbReference>
<dbReference type="GO" id="GO:0051539">
    <property type="term" value="F:4 iron, 4 sulfur cluster binding"/>
    <property type="evidence" value="ECO:0007669"/>
    <property type="project" value="UniProtKB-UniRule"/>
</dbReference>
<dbReference type="GO" id="GO:0046872">
    <property type="term" value="F:metal ion binding"/>
    <property type="evidence" value="ECO:0007669"/>
    <property type="project" value="UniProtKB-KW"/>
</dbReference>
<dbReference type="GO" id="GO:0035597">
    <property type="term" value="F:N6-isopentenyladenosine methylthiotransferase activity"/>
    <property type="evidence" value="ECO:0007669"/>
    <property type="project" value="TreeGrafter"/>
</dbReference>
<dbReference type="CDD" id="cd01335">
    <property type="entry name" value="Radical_SAM"/>
    <property type="match status" value="1"/>
</dbReference>
<dbReference type="FunFam" id="3.40.50.12160:FF:000003">
    <property type="entry name" value="CDK5 regulatory subunit-associated protein 1"/>
    <property type="match status" value="1"/>
</dbReference>
<dbReference type="FunFam" id="3.80.30.20:FF:000001">
    <property type="entry name" value="tRNA-2-methylthio-N(6)-dimethylallyladenosine synthase 2"/>
    <property type="match status" value="1"/>
</dbReference>
<dbReference type="Gene3D" id="3.40.50.12160">
    <property type="entry name" value="Methylthiotransferase, N-terminal domain"/>
    <property type="match status" value="1"/>
</dbReference>
<dbReference type="Gene3D" id="3.80.30.20">
    <property type="entry name" value="tm_1862 like domain"/>
    <property type="match status" value="1"/>
</dbReference>
<dbReference type="HAMAP" id="MF_01864">
    <property type="entry name" value="tRNA_metthiotr_MiaB"/>
    <property type="match status" value="1"/>
</dbReference>
<dbReference type="InterPro" id="IPR006638">
    <property type="entry name" value="Elp3/MiaA/NifB-like_rSAM"/>
</dbReference>
<dbReference type="InterPro" id="IPR005839">
    <property type="entry name" value="Methylthiotransferase"/>
</dbReference>
<dbReference type="InterPro" id="IPR020612">
    <property type="entry name" value="Methylthiotransferase_CS"/>
</dbReference>
<dbReference type="InterPro" id="IPR013848">
    <property type="entry name" value="Methylthiotransferase_N"/>
</dbReference>
<dbReference type="InterPro" id="IPR038135">
    <property type="entry name" value="Methylthiotransferase_N_sf"/>
</dbReference>
<dbReference type="InterPro" id="IPR006463">
    <property type="entry name" value="MiaB_methiolase"/>
</dbReference>
<dbReference type="InterPro" id="IPR007197">
    <property type="entry name" value="rSAM"/>
</dbReference>
<dbReference type="InterPro" id="IPR023404">
    <property type="entry name" value="rSAM_horseshoe"/>
</dbReference>
<dbReference type="InterPro" id="IPR002792">
    <property type="entry name" value="TRAM_dom"/>
</dbReference>
<dbReference type="NCBIfam" id="TIGR01574">
    <property type="entry name" value="miaB-methiolase"/>
    <property type="match status" value="1"/>
</dbReference>
<dbReference type="NCBIfam" id="TIGR00089">
    <property type="entry name" value="MiaB/RimO family radical SAM methylthiotransferase"/>
    <property type="match status" value="1"/>
</dbReference>
<dbReference type="PANTHER" id="PTHR43020">
    <property type="entry name" value="CDK5 REGULATORY SUBUNIT-ASSOCIATED PROTEIN 1"/>
    <property type="match status" value="1"/>
</dbReference>
<dbReference type="PANTHER" id="PTHR43020:SF2">
    <property type="entry name" value="MITOCHONDRIAL TRNA METHYLTHIOTRANSFERASE CDK5RAP1"/>
    <property type="match status" value="1"/>
</dbReference>
<dbReference type="Pfam" id="PF04055">
    <property type="entry name" value="Radical_SAM"/>
    <property type="match status" value="1"/>
</dbReference>
<dbReference type="Pfam" id="PF00919">
    <property type="entry name" value="UPF0004"/>
    <property type="match status" value="1"/>
</dbReference>
<dbReference type="SFLD" id="SFLDF00273">
    <property type="entry name" value="(dimethylallyl)adenosine_tRNA"/>
    <property type="match status" value="1"/>
</dbReference>
<dbReference type="SFLD" id="SFLDG01082">
    <property type="entry name" value="B12-binding_domain_containing"/>
    <property type="match status" value="1"/>
</dbReference>
<dbReference type="SFLD" id="SFLDG01061">
    <property type="entry name" value="methylthiotransferase"/>
    <property type="match status" value="1"/>
</dbReference>
<dbReference type="SMART" id="SM00729">
    <property type="entry name" value="Elp3"/>
    <property type="match status" value="1"/>
</dbReference>
<dbReference type="SUPFAM" id="SSF102114">
    <property type="entry name" value="Radical SAM enzymes"/>
    <property type="match status" value="1"/>
</dbReference>
<dbReference type="PROSITE" id="PS51449">
    <property type="entry name" value="MTTASE_N"/>
    <property type="match status" value="1"/>
</dbReference>
<dbReference type="PROSITE" id="PS01278">
    <property type="entry name" value="MTTASE_RADICAL"/>
    <property type="match status" value="1"/>
</dbReference>
<dbReference type="PROSITE" id="PS51918">
    <property type="entry name" value="RADICAL_SAM"/>
    <property type="match status" value="1"/>
</dbReference>
<dbReference type="PROSITE" id="PS50926">
    <property type="entry name" value="TRAM"/>
    <property type="match status" value="1"/>
</dbReference>